<accession>O07581</accession>
<accession>Q796X3</accession>
<protein>
    <recommendedName>
        <fullName>Probable anti-sigma-M factor YhdL</fullName>
    </recommendedName>
</protein>
<keyword id="KW-0472">Membrane</keyword>
<keyword id="KW-1185">Reference proteome</keyword>
<keyword id="KW-0678">Repressor</keyword>
<keyword id="KW-0804">Transcription</keyword>
<keyword id="KW-0805">Transcription regulation</keyword>
<keyword id="KW-0812">Transmembrane</keyword>
<keyword id="KW-1133">Transmembrane helix</keyword>
<reference key="1">
    <citation type="journal article" date="1998" name="Microbiology">
        <title>The 172 kb prkA-addAB region from 83 degrees to 97 degrees of the Bacillus subtilis chromosome contains several dysfunctional genes, the glyB marker, many genes encoding transporter proteins, and the ubiquitous hit gene.</title>
        <authorList>
            <person name="Noback M.A."/>
            <person name="Holsappel S."/>
            <person name="Kiewiet R."/>
            <person name="Terpstra P."/>
            <person name="Wambutt R."/>
            <person name="Wedler H."/>
            <person name="Venema G."/>
            <person name="Bron S."/>
        </authorList>
    </citation>
    <scope>NUCLEOTIDE SEQUENCE [GENOMIC DNA]</scope>
    <source>
        <strain>168</strain>
    </source>
</reference>
<reference key="2">
    <citation type="journal article" date="1997" name="Nature">
        <title>The complete genome sequence of the Gram-positive bacterium Bacillus subtilis.</title>
        <authorList>
            <person name="Kunst F."/>
            <person name="Ogasawara N."/>
            <person name="Moszer I."/>
            <person name="Albertini A.M."/>
            <person name="Alloni G."/>
            <person name="Azevedo V."/>
            <person name="Bertero M.G."/>
            <person name="Bessieres P."/>
            <person name="Bolotin A."/>
            <person name="Borchert S."/>
            <person name="Borriss R."/>
            <person name="Boursier L."/>
            <person name="Brans A."/>
            <person name="Braun M."/>
            <person name="Brignell S.C."/>
            <person name="Bron S."/>
            <person name="Brouillet S."/>
            <person name="Bruschi C.V."/>
            <person name="Caldwell B."/>
            <person name="Capuano V."/>
            <person name="Carter N.M."/>
            <person name="Choi S.-K."/>
            <person name="Codani J.-J."/>
            <person name="Connerton I.F."/>
            <person name="Cummings N.J."/>
            <person name="Daniel R.A."/>
            <person name="Denizot F."/>
            <person name="Devine K.M."/>
            <person name="Duesterhoeft A."/>
            <person name="Ehrlich S.D."/>
            <person name="Emmerson P.T."/>
            <person name="Entian K.-D."/>
            <person name="Errington J."/>
            <person name="Fabret C."/>
            <person name="Ferrari E."/>
            <person name="Foulger D."/>
            <person name="Fritz C."/>
            <person name="Fujita M."/>
            <person name="Fujita Y."/>
            <person name="Fuma S."/>
            <person name="Galizzi A."/>
            <person name="Galleron N."/>
            <person name="Ghim S.-Y."/>
            <person name="Glaser P."/>
            <person name="Goffeau A."/>
            <person name="Golightly E.J."/>
            <person name="Grandi G."/>
            <person name="Guiseppi G."/>
            <person name="Guy B.J."/>
            <person name="Haga K."/>
            <person name="Haiech J."/>
            <person name="Harwood C.R."/>
            <person name="Henaut A."/>
            <person name="Hilbert H."/>
            <person name="Holsappel S."/>
            <person name="Hosono S."/>
            <person name="Hullo M.-F."/>
            <person name="Itaya M."/>
            <person name="Jones L.-M."/>
            <person name="Joris B."/>
            <person name="Karamata D."/>
            <person name="Kasahara Y."/>
            <person name="Klaerr-Blanchard M."/>
            <person name="Klein C."/>
            <person name="Kobayashi Y."/>
            <person name="Koetter P."/>
            <person name="Koningstein G."/>
            <person name="Krogh S."/>
            <person name="Kumano M."/>
            <person name="Kurita K."/>
            <person name="Lapidus A."/>
            <person name="Lardinois S."/>
            <person name="Lauber J."/>
            <person name="Lazarevic V."/>
            <person name="Lee S.-M."/>
            <person name="Levine A."/>
            <person name="Liu H."/>
            <person name="Masuda S."/>
            <person name="Mauel C."/>
            <person name="Medigue C."/>
            <person name="Medina N."/>
            <person name="Mellado R.P."/>
            <person name="Mizuno M."/>
            <person name="Moestl D."/>
            <person name="Nakai S."/>
            <person name="Noback M."/>
            <person name="Noone D."/>
            <person name="O'Reilly M."/>
            <person name="Ogawa K."/>
            <person name="Ogiwara A."/>
            <person name="Oudega B."/>
            <person name="Park S.-H."/>
            <person name="Parro V."/>
            <person name="Pohl T.M."/>
            <person name="Portetelle D."/>
            <person name="Porwollik S."/>
            <person name="Prescott A.M."/>
            <person name="Presecan E."/>
            <person name="Pujic P."/>
            <person name="Purnelle B."/>
            <person name="Rapoport G."/>
            <person name="Rey M."/>
            <person name="Reynolds S."/>
            <person name="Rieger M."/>
            <person name="Rivolta C."/>
            <person name="Rocha E."/>
            <person name="Roche B."/>
            <person name="Rose M."/>
            <person name="Sadaie Y."/>
            <person name="Sato T."/>
            <person name="Scanlan E."/>
            <person name="Schleich S."/>
            <person name="Schroeter R."/>
            <person name="Scoffone F."/>
            <person name="Sekiguchi J."/>
            <person name="Sekowska A."/>
            <person name="Seror S.J."/>
            <person name="Serror P."/>
            <person name="Shin B.-S."/>
            <person name="Soldo B."/>
            <person name="Sorokin A."/>
            <person name="Tacconi E."/>
            <person name="Takagi T."/>
            <person name="Takahashi H."/>
            <person name="Takemaru K."/>
            <person name="Takeuchi M."/>
            <person name="Tamakoshi A."/>
            <person name="Tanaka T."/>
            <person name="Terpstra P."/>
            <person name="Tognoni A."/>
            <person name="Tosato V."/>
            <person name="Uchiyama S."/>
            <person name="Vandenbol M."/>
            <person name="Vannier F."/>
            <person name="Vassarotti A."/>
            <person name="Viari A."/>
            <person name="Wambutt R."/>
            <person name="Wedler E."/>
            <person name="Wedler H."/>
            <person name="Weitzenegger T."/>
            <person name="Winters P."/>
            <person name="Wipat A."/>
            <person name="Yamamoto H."/>
            <person name="Yamane K."/>
            <person name="Yasumoto K."/>
            <person name="Yata K."/>
            <person name="Yoshida K."/>
            <person name="Yoshikawa H.-F."/>
            <person name="Zumstein E."/>
            <person name="Yoshikawa H."/>
            <person name="Danchin A."/>
        </authorList>
    </citation>
    <scope>NUCLEOTIDE SEQUENCE [LARGE SCALE GENOMIC DNA]</scope>
    <source>
        <strain>168</strain>
    </source>
</reference>
<reference key="3">
    <citation type="journal article" date="1999" name="Mol. Microbiol.">
        <title>Sigma M, an ECF RNA polymerase sigma factor of Bacillus subtilis 168, is essential for growth and survival in high concentrations of salt.</title>
        <authorList>
            <person name="Horsburgh M.J."/>
            <person name="Moir A."/>
        </authorList>
    </citation>
    <scope>TRANSCRIPTION</scope>
    <source>
        <strain>168</strain>
    </source>
</reference>
<reference key="4">
    <citation type="journal article" date="2004" name="Microbiology">
        <title>Interaction of Bacillus subtilis extracytoplasmic function (ECF) sigma factors with the N-terminal regions of their potential anti-sigma factors.</title>
        <authorList>
            <person name="Yoshimura M."/>
            <person name="Asai K."/>
            <person name="Sadaie Y."/>
            <person name="Yoshikawa H."/>
        </authorList>
    </citation>
    <scope>INTERACTION WITH SIGM AND YHDK</scope>
</reference>
<feature type="chain" id="PRO_0000049570" description="Probable anti-sigma-M factor YhdL">
    <location>
        <begin position="1"/>
        <end position="358"/>
    </location>
</feature>
<feature type="transmembrane region" description="Helical" evidence="1">
    <location>
        <begin position="74"/>
        <end position="96"/>
    </location>
</feature>
<proteinExistence type="evidence at protein level"/>
<evidence type="ECO:0000255" key="1"/>
<evidence type="ECO:0000269" key="2">
    <source>
    </source>
</evidence>
<evidence type="ECO:0000305" key="3"/>
<organism>
    <name type="scientific">Bacillus subtilis (strain 168)</name>
    <dbReference type="NCBI Taxonomy" id="224308"/>
    <lineage>
        <taxon>Bacteria</taxon>
        <taxon>Bacillati</taxon>
        <taxon>Bacillota</taxon>
        <taxon>Bacilli</taxon>
        <taxon>Bacillales</taxon>
        <taxon>Bacillaceae</taxon>
        <taxon>Bacillus</taxon>
    </lineage>
</organism>
<dbReference type="EMBL" id="Y14082">
    <property type="protein sequence ID" value="CAA74496.1"/>
    <property type="molecule type" value="Genomic_DNA"/>
</dbReference>
<dbReference type="EMBL" id="AL009126">
    <property type="protein sequence ID" value="CAB12790.1"/>
    <property type="molecule type" value="Genomic_DNA"/>
</dbReference>
<dbReference type="PIR" id="B69826">
    <property type="entry name" value="B69826"/>
</dbReference>
<dbReference type="RefSeq" id="WP_010886459.1">
    <property type="nucleotide sequence ID" value="NZ_OZ025638.1"/>
</dbReference>
<dbReference type="SMR" id="O07581"/>
<dbReference type="FunCoup" id="O07581">
    <property type="interactions" value="66"/>
</dbReference>
<dbReference type="IntAct" id="O07581">
    <property type="interactions" value="2"/>
</dbReference>
<dbReference type="STRING" id="224308.BSU09510"/>
<dbReference type="PaxDb" id="224308-BSU09510"/>
<dbReference type="EnsemblBacteria" id="CAB12790">
    <property type="protein sequence ID" value="CAB12790"/>
    <property type="gene ID" value="BSU_09510"/>
</dbReference>
<dbReference type="GeneID" id="939753"/>
<dbReference type="KEGG" id="bsu:BSU09510"/>
<dbReference type="PATRIC" id="fig|224308.43.peg.993"/>
<dbReference type="eggNOG" id="ENOG502Z96W">
    <property type="taxonomic scope" value="Bacteria"/>
</dbReference>
<dbReference type="InParanoid" id="O07581"/>
<dbReference type="OrthoDB" id="2730366at2"/>
<dbReference type="BioCyc" id="BSUB:BSU09510-MONOMER"/>
<dbReference type="Proteomes" id="UP000001570">
    <property type="component" value="Chromosome"/>
</dbReference>
<dbReference type="GO" id="GO:0016020">
    <property type="term" value="C:membrane"/>
    <property type="evidence" value="ECO:0007669"/>
    <property type="project" value="UniProtKB-SubCell"/>
</dbReference>
<dbReference type="InterPro" id="IPR025672">
    <property type="entry name" value="Sigma_reg_C_dom"/>
</dbReference>
<dbReference type="InterPro" id="IPR029101">
    <property type="entry name" value="Sigma_reg_N"/>
</dbReference>
<dbReference type="Pfam" id="PF13791">
    <property type="entry name" value="Sigma_reg_C"/>
    <property type="match status" value="1"/>
</dbReference>
<dbReference type="Pfam" id="PF13800">
    <property type="entry name" value="Sigma_reg_N"/>
    <property type="match status" value="1"/>
</dbReference>
<comment type="subunit">
    <text evidence="2">The N-terminus of YhdL interacts with sigma-M. YhdL interacts specifically with YhdK.</text>
</comment>
<comment type="interaction">
    <interactant intactId="EBI-2122262">
        <id>O07581</id>
    </interactant>
    <interactant intactId="EBI-2122277">
        <id>O07580</id>
        <label>yhdK</label>
    </interactant>
    <organismsDiffer>false</organismsDiffer>
    <experiments>4</experiments>
</comment>
<comment type="subcellular location">
    <subcellularLocation>
        <location evidence="3">Membrane</location>
        <topology evidence="3">Single-pass membrane protein</topology>
    </subcellularLocation>
</comment>
<comment type="induction">
    <text>Cotranscribed with sigma-M and yhdK. YhdL and yhdK negatively regulate sigma-M.</text>
</comment>
<sequence length="358" mass="40581">MMNEEFKKRFDQYKNGEMSDQEMTAFEEELEKLEVYQELIDSELEDDNDWDLSISPEKQKAILAYGKRKSYLRISVLAVISTLMILPLCTLGSYLYYGMGGKHSTGNEFMETAAVTVALTMPNVLVDTSGLKSQVKLFGMNTEFPLQKQIGTKTAAVGNERVEMFYNKVKAPAVNYYDLEVNKTGHYFTHPSNKSEQTTAKAEKTLSTLPEGTVSEVYLSYDRAYPTKDVYNKFKGYDVSFLWNAIETEKNTNKTASTEPLGYPGKDSKFLAALNTKGKSNGDQFINALKFMSKHEKWAQVISKRKDLNVDNRLDYVEKNGVNVYGSVVTGPTKEIQRMLKNKSVKSANVGEVELWNW</sequence>
<name>YHDL_BACSU</name>
<gene>
    <name type="primary">yhdL</name>
    <name type="ordered locus">BSU09510</name>
</gene>